<sequence>MKLRPLHDRILVKRVEEETKTAGGLFIPETAKEKPQRGEVVAAGNGKKTEDGKVLPLDVKVGDKVLFGKYSGTEVKVDGEDFLMMREDDILAVVE</sequence>
<dbReference type="EMBL" id="CP000482">
    <property type="protein sequence ID" value="ABL00403.1"/>
    <property type="molecule type" value="Genomic_DNA"/>
</dbReference>
<dbReference type="RefSeq" id="WP_011736644.1">
    <property type="nucleotide sequence ID" value="NC_008609.1"/>
</dbReference>
<dbReference type="SMR" id="A1AST2"/>
<dbReference type="STRING" id="338966.Ppro_2803"/>
<dbReference type="KEGG" id="ppd:Ppro_2803"/>
<dbReference type="eggNOG" id="COG0234">
    <property type="taxonomic scope" value="Bacteria"/>
</dbReference>
<dbReference type="HOGENOM" id="CLU_132825_2_0_7"/>
<dbReference type="OrthoDB" id="9806791at2"/>
<dbReference type="Proteomes" id="UP000006732">
    <property type="component" value="Chromosome"/>
</dbReference>
<dbReference type="GO" id="GO:0005737">
    <property type="term" value="C:cytoplasm"/>
    <property type="evidence" value="ECO:0007669"/>
    <property type="project" value="UniProtKB-SubCell"/>
</dbReference>
<dbReference type="GO" id="GO:0005524">
    <property type="term" value="F:ATP binding"/>
    <property type="evidence" value="ECO:0007669"/>
    <property type="project" value="InterPro"/>
</dbReference>
<dbReference type="GO" id="GO:0046872">
    <property type="term" value="F:metal ion binding"/>
    <property type="evidence" value="ECO:0007669"/>
    <property type="project" value="TreeGrafter"/>
</dbReference>
<dbReference type="GO" id="GO:0044183">
    <property type="term" value="F:protein folding chaperone"/>
    <property type="evidence" value="ECO:0007669"/>
    <property type="project" value="InterPro"/>
</dbReference>
<dbReference type="GO" id="GO:0051087">
    <property type="term" value="F:protein-folding chaperone binding"/>
    <property type="evidence" value="ECO:0007669"/>
    <property type="project" value="TreeGrafter"/>
</dbReference>
<dbReference type="GO" id="GO:0051082">
    <property type="term" value="F:unfolded protein binding"/>
    <property type="evidence" value="ECO:0007669"/>
    <property type="project" value="TreeGrafter"/>
</dbReference>
<dbReference type="GO" id="GO:0051085">
    <property type="term" value="P:chaperone cofactor-dependent protein refolding"/>
    <property type="evidence" value="ECO:0007669"/>
    <property type="project" value="TreeGrafter"/>
</dbReference>
<dbReference type="CDD" id="cd00320">
    <property type="entry name" value="cpn10"/>
    <property type="match status" value="1"/>
</dbReference>
<dbReference type="FunFam" id="2.30.33.40:FF:000001">
    <property type="entry name" value="10 kDa chaperonin"/>
    <property type="match status" value="1"/>
</dbReference>
<dbReference type="Gene3D" id="2.30.33.40">
    <property type="entry name" value="GroES chaperonin"/>
    <property type="match status" value="1"/>
</dbReference>
<dbReference type="HAMAP" id="MF_00580">
    <property type="entry name" value="CH10"/>
    <property type="match status" value="1"/>
</dbReference>
<dbReference type="InterPro" id="IPR020818">
    <property type="entry name" value="Chaperonin_GroES"/>
</dbReference>
<dbReference type="InterPro" id="IPR037124">
    <property type="entry name" value="Chaperonin_GroES_sf"/>
</dbReference>
<dbReference type="InterPro" id="IPR018369">
    <property type="entry name" value="Chaprnonin_Cpn10_CS"/>
</dbReference>
<dbReference type="InterPro" id="IPR011032">
    <property type="entry name" value="GroES-like_sf"/>
</dbReference>
<dbReference type="NCBIfam" id="NF001527">
    <property type="entry name" value="PRK00364.1-2"/>
    <property type="match status" value="1"/>
</dbReference>
<dbReference type="NCBIfam" id="NF001529">
    <property type="entry name" value="PRK00364.1-5"/>
    <property type="match status" value="1"/>
</dbReference>
<dbReference type="NCBIfam" id="NF001530">
    <property type="entry name" value="PRK00364.1-6"/>
    <property type="match status" value="1"/>
</dbReference>
<dbReference type="NCBIfam" id="NF001531">
    <property type="entry name" value="PRK00364.2-2"/>
    <property type="match status" value="1"/>
</dbReference>
<dbReference type="NCBIfam" id="NF001533">
    <property type="entry name" value="PRK00364.2-4"/>
    <property type="match status" value="1"/>
</dbReference>
<dbReference type="NCBIfam" id="NF001534">
    <property type="entry name" value="PRK00364.2-5"/>
    <property type="match status" value="1"/>
</dbReference>
<dbReference type="PANTHER" id="PTHR10772">
    <property type="entry name" value="10 KDA HEAT SHOCK PROTEIN"/>
    <property type="match status" value="1"/>
</dbReference>
<dbReference type="PANTHER" id="PTHR10772:SF58">
    <property type="entry name" value="CO-CHAPERONIN GROES"/>
    <property type="match status" value="1"/>
</dbReference>
<dbReference type="Pfam" id="PF00166">
    <property type="entry name" value="Cpn10"/>
    <property type="match status" value="1"/>
</dbReference>
<dbReference type="PRINTS" id="PR00297">
    <property type="entry name" value="CHAPERONIN10"/>
</dbReference>
<dbReference type="SMART" id="SM00883">
    <property type="entry name" value="Cpn10"/>
    <property type="match status" value="1"/>
</dbReference>
<dbReference type="SUPFAM" id="SSF50129">
    <property type="entry name" value="GroES-like"/>
    <property type="match status" value="1"/>
</dbReference>
<dbReference type="PROSITE" id="PS00681">
    <property type="entry name" value="CHAPERONINS_CPN10"/>
    <property type="match status" value="1"/>
</dbReference>
<evidence type="ECO:0000255" key="1">
    <source>
        <dbReference type="HAMAP-Rule" id="MF_00580"/>
    </source>
</evidence>
<keyword id="KW-0143">Chaperone</keyword>
<keyword id="KW-0963">Cytoplasm</keyword>
<keyword id="KW-1185">Reference proteome</keyword>
<reference key="1">
    <citation type="submission" date="2006-10" db="EMBL/GenBank/DDBJ databases">
        <title>Complete sequence of chromosome of Pelobacter propionicus DSM 2379.</title>
        <authorList>
            <consortium name="US DOE Joint Genome Institute"/>
            <person name="Copeland A."/>
            <person name="Lucas S."/>
            <person name="Lapidus A."/>
            <person name="Barry K."/>
            <person name="Detter J.C."/>
            <person name="Glavina del Rio T."/>
            <person name="Hammon N."/>
            <person name="Israni S."/>
            <person name="Dalin E."/>
            <person name="Tice H."/>
            <person name="Pitluck S."/>
            <person name="Saunders E."/>
            <person name="Brettin T."/>
            <person name="Bruce D."/>
            <person name="Han C."/>
            <person name="Tapia R."/>
            <person name="Schmutz J."/>
            <person name="Larimer F."/>
            <person name="Land M."/>
            <person name="Hauser L."/>
            <person name="Kyrpides N."/>
            <person name="Kim E."/>
            <person name="Lovley D."/>
            <person name="Richardson P."/>
        </authorList>
    </citation>
    <scope>NUCLEOTIDE SEQUENCE [LARGE SCALE GENOMIC DNA]</scope>
    <source>
        <strain>DSM 2379 / NBRC 103807 / OttBd1</strain>
    </source>
</reference>
<accession>A1AST2</accession>
<organism>
    <name type="scientific">Pelobacter propionicus (strain DSM 2379 / NBRC 103807 / OttBd1)</name>
    <dbReference type="NCBI Taxonomy" id="338966"/>
    <lineage>
        <taxon>Bacteria</taxon>
        <taxon>Pseudomonadati</taxon>
        <taxon>Thermodesulfobacteriota</taxon>
        <taxon>Desulfuromonadia</taxon>
        <taxon>Desulfuromonadales</taxon>
        <taxon>Desulfuromonadaceae</taxon>
        <taxon>Pelobacter</taxon>
    </lineage>
</organism>
<feature type="chain" id="PRO_1000025320" description="Co-chaperonin GroES">
    <location>
        <begin position="1"/>
        <end position="95"/>
    </location>
</feature>
<comment type="function">
    <text evidence="1">Together with the chaperonin GroEL, plays an essential role in assisting protein folding. The GroEL-GroES system forms a nano-cage that allows encapsulation of the non-native substrate proteins and provides a physical environment optimized to promote and accelerate protein folding. GroES binds to the apical surface of the GroEL ring, thereby capping the opening of the GroEL channel.</text>
</comment>
<comment type="subunit">
    <text evidence="1">Heptamer of 7 subunits arranged in a ring. Interacts with the chaperonin GroEL.</text>
</comment>
<comment type="subcellular location">
    <subcellularLocation>
        <location evidence="1">Cytoplasm</location>
    </subcellularLocation>
</comment>
<comment type="similarity">
    <text evidence="1">Belongs to the GroES chaperonin family.</text>
</comment>
<name>CH10_PELPD</name>
<gene>
    <name evidence="1" type="primary">groES</name>
    <name evidence="1" type="synonym">groS</name>
    <name type="ordered locus">Ppro_2803</name>
</gene>
<protein>
    <recommendedName>
        <fullName evidence="1">Co-chaperonin GroES</fullName>
    </recommendedName>
    <alternativeName>
        <fullName evidence="1">10 kDa chaperonin</fullName>
    </alternativeName>
    <alternativeName>
        <fullName evidence="1">Chaperonin-10</fullName>
        <shortName evidence="1">Cpn10</shortName>
    </alternativeName>
</protein>
<proteinExistence type="inferred from homology"/>